<accession>A8MLE3</accession>
<keyword id="KW-1185">Reference proteome</keyword>
<keyword id="KW-0687">Ribonucleoprotein</keyword>
<keyword id="KW-0689">Ribosomal protein</keyword>
<keyword id="KW-0694">RNA-binding</keyword>
<keyword id="KW-0699">rRNA-binding</keyword>
<gene>
    <name evidence="1" type="primary">rplB</name>
    <name type="ordered locus">Clos_0495</name>
</gene>
<sequence>MAIRKLKPTSPAKRQMTVSTFEEITTNQPEKSLLEPIKNSGGRNSYGRITVRHRGGAQKRHYRIIDFKRNKDGVPAKVATIEYDPNRSANIALLHYVDGEKRYIIAPQGLKVGDMVESGPNADIKTGNALPLANIPVGTMIHNIEMKPGKGAQLVRAAGNSAQLMAKEGKHALVRLPSTEVRYLPIDCKATIGQVGNQEHENITIGKAGRKRNMGIRPTVRGSAMNPNDHPHGGGEGRTSIGRPAPVTPWGKPALGYKTRDSKKASNKMIVSRRKK</sequence>
<protein>
    <recommendedName>
        <fullName evidence="1">Large ribosomal subunit protein uL2</fullName>
    </recommendedName>
    <alternativeName>
        <fullName evidence="3">50S ribosomal protein L2</fullName>
    </alternativeName>
</protein>
<evidence type="ECO:0000255" key="1">
    <source>
        <dbReference type="HAMAP-Rule" id="MF_01320"/>
    </source>
</evidence>
<evidence type="ECO:0000256" key="2">
    <source>
        <dbReference type="SAM" id="MobiDB-lite"/>
    </source>
</evidence>
<evidence type="ECO:0000305" key="3"/>
<comment type="function">
    <text evidence="1">One of the primary rRNA binding proteins. Required for association of the 30S and 50S subunits to form the 70S ribosome, for tRNA binding and peptide bond formation. It has been suggested to have peptidyltransferase activity; this is somewhat controversial. Makes several contacts with the 16S rRNA in the 70S ribosome.</text>
</comment>
<comment type="subunit">
    <text evidence="1">Part of the 50S ribosomal subunit. Forms a bridge to the 30S subunit in the 70S ribosome.</text>
</comment>
<comment type="similarity">
    <text evidence="1">Belongs to the universal ribosomal protein uL2 family.</text>
</comment>
<organism>
    <name type="scientific">Alkaliphilus oremlandii (strain OhILAs)</name>
    <name type="common">Clostridium oremlandii (strain OhILAs)</name>
    <dbReference type="NCBI Taxonomy" id="350688"/>
    <lineage>
        <taxon>Bacteria</taxon>
        <taxon>Bacillati</taxon>
        <taxon>Bacillota</taxon>
        <taxon>Clostridia</taxon>
        <taxon>Peptostreptococcales</taxon>
        <taxon>Natronincolaceae</taxon>
        <taxon>Alkaliphilus</taxon>
    </lineage>
</organism>
<dbReference type="EMBL" id="CP000853">
    <property type="protein sequence ID" value="ABW18057.1"/>
    <property type="molecule type" value="Genomic_DNA"/>
</dbReference>
<dbReference type="RefSeq" id="WP_012158371.1">
    <property type="nucleotide sequence ID" value="NC_009922.1"/>
</dbReference>
<dbReference type="SMR" id="A8MLE3"/>
<dbReference type="STRING" id="350688.Clos_0495"/>
<dbReference type="KEGG" id="aoe:Clos_0495"/>
<dbReference type="eggNOG" id="COG0090">
    <property type="taxonomic scope" value="Bacteria"/>
</dbReference>
<dbReference type="HOGENOM" id="CLU_036235_2_1_9"/>
<dbReference type="OrthoDB" id="9778722at2"/>
<dbReference type="Proteomes" id="UP000000269">
    <property type="component" value="Chromosome"/>
</dbReference>
<dbReference type="GO" id="GO:0015934">
    <property type="term" value="C:large ribosomal subunit"/>
    <property type="evidence" value="ECO:0007669"/>
    <property type="project" value="InterPro"/>
</dbReference>
<dbReference type="GO" id="GO:0019843">
    <property type="term" value="F:rRNA binding"/>
    <property type="evidence" value="ECO:0007669"/>
    <property type="project" value="UniProtKB-UniRule"/>
</dbReference>
<dbReference type="GO" id="GO:0003735">
    <property type="term" value="F:structural constituent of ribosome"/>
    <property type="evidence" value="ECO:0007669"/>
    <property type="project" value="InterPro"/>
</dbReference>
<dbReference type="GO" id="GO:0016740">
    <property type="term" value="F:transferase activity"/>
    <property type="evidence" value="ECO:0007669"/>
    <property type="project" value="InterPro"/>
</dbReference>
<dbReference type="GO" id="GO:0002181">
    <property type="term" value="P:cytoplasmic translation"/>
    <property type="evidence" value="ECO:0007669"/>
    <property type="project" value="TreeGrafter"/>
</dbReference>
<dbReference type="FunFam" id="2.30.30.30:FF:000001">
    <property type="entry name" value="50S ribosomal protein L2"/>
    <property type="match status" value="1"/>
</dbReference>
<dbReference type="FunFam" id="2.40.50.140:FF:000003">
    <property type="entry name" value="50S ribosomal protein L2"/>
    <property type="match status" value="1"/>
</dbReference>
<dbReference type="FunFam" id="4.10.950.10:FF:000001">
    <property type="entry name" value="50S ribosomal protein L2"/>
    <property type="match status" value="1"/>
</dbReference>
<dbReference type="Gene3D" id="2.30.30.30">
    <property type="match status" value="1"/>
</dbReference>
<dbReference type="Gene3D" id="2.40.50.140">
    <property type="entry name" value="Nucleic acid-binding proteins"/>
    <property type="match status" value="1"/>
</dbReference>
<dbReference type="Gene3D" id="4.10.950.10">
    <property type="entry name" value="Ribosomal protein L2, domain 3"/>
    <property type="match status" value="1"/>
</dbReference>
<dbReference type="HAMAP" id="MF_01320_B">
    <property type="entry name" value="Ribosomal_uL2_B"/>
    <property type="match status" value="1"/>
</dbReference>
<dbReference type="InterPro" id="IPR012340">
    <property type="entry name" value="NA-bd_OB-fold"/>
</dbReference>
<dbReference type="InterPro" id="IPR014722">
    <property type="entry name" value="Rib_uL2_dom2"/>
</dbReference>
<dbReference type="InterPro" id="IPR002171">
    <property type="entry name" value="Ribosomal_uL2"/>
</dbReference>
<dbReference type="InterPro" id="IPR005880">
    <property type="entry name" value="Ribosomal_uL2_bac/org-type"/>
</dbReference>
<dbReference type="InterPro" id="IPR022669">
    <property type="entry name" value="Ribosomal_uL2_C"/>
</dbReference>
<dbReference type="InterPro" id="IPR022671">
    <property type="entry name" value="Ribosomal_uL2_CS"/>
</dbReference>
<dbReference type="InterPro" id="IPR014726">
    <property type="entry name" value="Ribosomal_uL2_dom3"/>
</dbReference>
<dbReference type="InterPro" id="IPR022666">
    <property type="entry name" value="Ribosomal_uL2_RNA-bd_dom"/>
</dbReference>
<dbReference type="InterPro" id="IPR008991">
    <property type="entry name" value="Translation_prot_SH3-like_sf"/>
</dbReference>
<dbReference type="NCBIfam" id="TIGR01171">
    <property type="entry name" value="rplB_bact"/>
    <property type="match status" value="1"/>
</dbReference>
<dbReference type="PANTHER" id="PTHR13691:SF5">
    <property type="entry name" value="LARGE RIBOSOMAL SUBUNIT PROTEIN UL2M"/>
    <property type="match status" value="1"/>
</dbReference>
<dbReference type="PANTHER" id="PTHR13691">
    <property type="entry name" value="RIBOSOMAL PROTEIN L2"/>
    <property type="match status" value="1"/>
</dbReference>
<dbReference type="Pfam" id="PF00181">
    <property type="entry name" value="Ribosomal_L2"/>
    <property type="match status" value="1"/>
</dbReference>
<dbReference type="Pfam" id="PF03947">
    <property type="entry name" value="Ribosomal_L2_C"/>
    <property type="match status" value="1"/>
</dbReference>
<dbReference type="PIRSF" id="PIRSF002158">
    <property type="entry name" value="Ribosomal_L2"/>
    <property type="match status" value="1"/>
</dbReference>
<dbReference type="SMART" id="SM01383">
    <property type="entry name" value="Ribosomal_L2"/>
    <property type="match status" value="1"/>
</dbReference>
<dbReference type="SMART" id="SM01382">
    <property type="entry name" value="Ribosomal_L2_C"/>
    <property type="match status" value="1"/>
</dbReference>
<dbReference type="SUPFAM" id="SSF50249">
    <property type="entry name" value="Nucleic acid-binding proteins"/>
    <property type="match status" value="1"/>
</dbReference>
<dbReference type="SUPFAM" id="SSF50104">
    <property type="entry name" value="Translation proteins SH3-like domain"/>
    <property type="match status" value="1"/>
</dbReference>
<dbReference type="PROSITE" id="PS00467">
    <property type="entry name" value="RIBOSOMAL_L2"/>
    <property type="match status" value="1"/>
</dbReference>
<reference key="1">
    <citation type="submission" date="2007-10" db="EMBL/GenBank/DDBJ databases">
        <title>Complete genome of Alkaliphilus oremlandii OhILAs.</title>
        <authorList>
            <person name="Copeland A."/>
            <person name="Lucas S."/>
            <person name="Lapidus A."/>
            <person name="Barry K."/>
            <person name="Detter J.C."/>
            <person name="Glavina del Rio T."/>
            <person name="Hammon N."/>
            <person name="Israni S."/>
            <person name="Dalin E."/>
            <person name="Tice H."/>
            <person name="Pitluck S."/>
            <person name="Chain P."/>
            <person name="Malfatti S."/>
            <person name="Shin M."/>
            <person name="Vergez L."/>
            <person name="Schmutz J."/>
            <person name="Larimer F."/>
            <person name="Land M."/>
            <person name="Hauser L."/>
            <person name="Kyrpides N."/>
            <person name="Mikhailova N."/>
            <person name="Stolz J.F."/>
            <person name="Dawson A."/>
            <person name="Fisher E."/>
            <person name="Crable B."/>
            <person name="Perera E."/>
            <person name="Lisak J."/>
            <person name="Ranganathan M."/>
            <person name="Basu P."/>
            <person name="Richardson P."/>
        </authorList>
    </citation>
    <scope>NUCLEOTIDE SEQUENCE [LARGE SCALE GENOMIC DNA]</scope>
    <source>
        <strain>OhILAs</strain>
    </source>
</reference>
<proteinExistence type="inferred from homology"/>
<name>RL2_ALKOO</name>
<feature type="chain" id="PRO_1000067536" description="Large ribosomal subunit protein uL2">
    <location>
        <begin position="1"/>
        <end position="276"/>
    </location>
</feature>
<feature type="region of interest" description="Disordered" evidence="2">
    <location>
        <begin position="219"/>
        <end position="276"/>
    </location>
</feature>